<proteinExistence type="inferred from homology"/>
<feature type="chain" id="PRO_0000116088" description="Envelope protein UL45">
    <location>
        <begin position="1"/>
        <end position="172"/>
    </location>
</feature>
<feature type="topological domain" description="Intravirion" evidence="2">
    <location>
        <begin position="1"/>
        <end position="27"/>
    </location>
</feature>
<feature type="transmembrane region" description="Helical; Signal-anchor for type II membrane protein" evidence="2">
    <location>
        <begin position="28"/>
        <end position="48"/>
    </location>
</feature>
<feature type="topological domain" description="Virion surface" evidence="2">
    <location>
        <begin position="49"/>
        <end position="172"/>
    </location>
</feature>
<name>EV45_HHV1M</name>
<dbReference type="EMBL" id="K03351">
    <property type="protein sequence ID" value="AAA45783.1"/>
    <property type="molecule type" value="Genomic_DNA"/>
</dbReference>
<dbReference type="GO" id="GO:0016020">
    <property type="term" value="C:membrane"/>
    <property type="evidence" value="ECO:0007669"/>
    <property type="project" value="UniProtKB-KW"/>
</dbReference>
<dbReference type="GO" id="GO:0019031">
    <property type="term" value="C:viral envelope"/>
    <property type="evidence" value="ECO:0007669"/>
    <property type="project" value="UniProtKB-KW"/>
</dbReference>
<dbReference type="GO" id="GO:0055036">
    <property type="term" value="C:virion membrane"/>
    <property type="evidence" value="ECO:0007669"/>
    <property type="project" value="UniProtKB-SubCell"/>
</dbReference>
<dbReference type="InterPro" id="IPR018002">
    <property type="entry name" value="Herpes_UL45"/>
</dbReference>
<dbReference type="Pfam" id="PF05473">
    <property type="entry name" value="UL45"/>
    <property type="match status" value="1"/>
</dbReference>
<dbReference type="PIRSF" id="PIRSF003509">
    <property type="entry name" value="Herpes_UL45"/>
    <property type="match status" value="1"/>
</dbReference>
<organismHost>
    <name type="scientific">Homo sapiens</name>
    <name type="common">Human</name>
    <dbReference type="NCBI Taxonomy" id="9606"/>
</organismHost>
<keyword id="KW-0472">Membrane</keyword>
<keyword id="KW-0735">Signal-anchor</keyword>
<keyword id="KW-0812">Transmembrane</keyword>
<keyword id="KW-1133">Transmembrane helix</keyword>
<keyword id="KW-0261">Viral envelope protein</keyword>
<keyword id="KW-0946">Virion</keyword>
<evidence type="ECO:0000250" key="1"/>
<evidence type="ECO:0000255" key="2"/>
<evidence type="ECO:0000305" key="3"/>
<comment type="function">
    <text evidence="1">Important virulence factor of HSV neurotropism. Seems to be required for glycoprotein B-induced fusion. Dispensable for growth in vitro (By similarity).</text>
</comment>
<comment type="subcellular location">
    <subcellularLocation>
        <location evidence="1">Virion membrane</location>
        <topology evidence="1">Single-pass type II membrane protein</topology>
    </subcellularLocation>
    <text evidence="1">In transfected cells, it is retained within the ER.</text>
</comment>
<comment type="similarity">
    <text evidence="3">Belongs to the herpesviridae HHV-1 UL45 family.</text>
</comment>
<reference key="1">
    <citation type="journal article" date="1984" name="J. Virol.">
        <title>Molecular basis of the glycoprotein-C-negative phenotype of herpes simplex virus type 1 macroplaque strain.</title>
        <authorList>
            <person name="Draper K.G."/>
            <person name="Costa R.H."/>
            <person name="Lee G.T.-Y."/>
            <person name="Spear P.G."/>
            <person name="Wagner E.K."/>
        </authorList>
    </citation>
    <scope>NUCLEOTIDE SEQUENCE [GENOMIC DNA]</scope>
</reference>
<accession>P06482</accession>
<sequence>MPLRASEHAYRPLGPGTPPVRARLPAAAWVGVGTIIGGVVIIAALVLVPSRASWALSPCDSGWHEFNLGCISWDPTPMEHEQAVGGCSAPATLIPRAAAKQLAAVARVQSARSSGYWWVSGDGIRARLRLVDGVGGIDQFCEEPALRICYYPRSPGGFVQFVTSTRNALGLP</sequence>
<gene>
    <name type="ORF">UL45</name>
</gene>
<organism>
    <name type="scientific">Human herpesvirus 1 (strain MP)</name>
    <name type="common">HHV-1</name>
    <name type="synonym">Human herpes simplex virus 1</name>
    <dbReference type="NCBI Taxonomy" id="10307"/>
    <lineage>
        <taxon>Viruses</taxon>
        <taxon>Duplodnaviria</taxon>
        <taxon>Heunggongvirae</taxon>
        <taxon>Peploviricota</taxon>
        <taxon>Herviviricetes</taxon>
        <taxon>Herpesvirales</taxon>
        <taxon>Orthoherpesviridae</taxon>
        <taxon>Alphaherpesvirinae</taxon>
        <taxon>Simplexvirus</taxon>
        <taxon>Simplexvirus humanalpha1</taxon>
        <taxon>Human herpesvirus 1</taxon>
    </lineage>
</organism>
<protein>
    <recommendedName>
        <fullName>Envelope protein UL45</fullName>
    </recommendedName>
    <alternativeName>
        <fullName>18 kDa protein</fullName>
    </alternativeName>
</protein>